<gene>
    <name evidence="1" type="primary">atpD</name>
    <name type="ordered locus">SAR11_0230</name>
</gene>
<accession>Q4FP38</accession>
<name>ATPB_PELUB</name>
<feature type="chain" id="PRO_0000254324" description="ATP synthase subunit beta">
    <location>
        <begin position="1"/>
        <end position="472"/>
    </location>
</feature>
<feature type="binding site" evidence="1">
    <location>
        <begin position="149"/>
        <end position="156"/>
    </location>
    <ligand>
        <name>ATP</name>
        <dbReference type="ChEBI" id="CHEBI:30616"/>
    </ligand>
</feature>
<proteinExistence type="inferred from homology"/>
<comment type="function">
    <text evidence="1">Produces ATP from ADP in the presence of a proton gradient across the membrane. The catalytic sites are hosted primarily by the beta subunits.</text>
</comment>
<comment type="catalytic activity">
    <reaction evidence="1">
        <text>ATP + H2O + 4 H(+)(in) = ADP + phosphate + 5 H(+)(out)</text>
        <dbReference type="Rhea" id="RHEA:57720"/>
        <dbReference type="ChEBI" id="CHEBI:15377"/>
        <dbReference type="ChEBI" id="CHEBI:15378"/>
        <dbReference type="ChEBI" id="CHEBI:30616"/>
        <dbReference type="ChEBI" id="CHEBI:43474"/>
        <dbReference type="ChEBI" id="CHEBI:456216"/>
        <dbReference type="EC" id="7.1.2.2"/>
    </reaction>
</comment>
<comment type="subunit">
    <text evidence="1">F-type ATPases have 2 components, CF(1) - the catalytic core - and CF(0) - the membrane proton channel. CF(1) has five subunits: alpha(3), beta(3), gamma(1), delta(1), epsilon(1). CF(0) has three main subunits: a(1), b(2) and c(9-12). The alpha and beta chains form an alternating ring which encloses part of the gamma chain. CF(1) is attached to CF(0) by a central stalk formed by the gamma and epsilon chains, while a peripheral stalk is formed by the delta and b chains.</text>
</comment>
<comment type="subcellular location">
    <subcellularLocation>
        <location evidence="1">Cell inner membrane</location>
        <topology evidence="1">Peripheral membrane protein</topology>
    </subcellularLocation>
</comment>
<comment type="similarity">
    <text evidence="1">Belongs to the ATPase alpha/beta chains family.</text>
</comment>
<sequence length="472" mass="50728">MSKGKITQIIGAVVDVKFDGELPEILSALECKNGDNRLVLEVAQHLGESSVRTIAMDATEGLKRGDEVTATGAPIQVPVGPETLGRIINVIGEPIDEKGEVKTKEKWPIHRAAPEFSDQSTETEILVTGIKVVDLLAPYAKGGKIGLFGGAGVGKTVLIMELINNVAKAHGGFSVFAGVGERTREGNDLYHEMIDSGVIKPEGPGSKAALVYGQMNEPPGARARVALTGLTVAEYFRDQEGQDVLFFVDNIFRFTQAGSEVSALLGRIPSAVGYQPTLATDMGNLQERITTTNKGSITSVQAIYVPADDLTDPAPATSFAHLDATTVLSRQIAEIGIYPAVDPLDSTSRILDPRIVGDEHYRVAREVQKILQTYKSLQDIIAILGMDELSEEDKLTVARARKIQRFLSQPFFVAEVFTGSPGKLVDLESTIKGFAAICNGEYDHLPEAAFYMVGTIEEAVEKAEKMAKDAAA</sequence>
<protein>
    <recommendedName>
        <fullName evidence="1">ATP synthase subunit beta</fullName>
        <ecNumber evidence="1">7.1.2.2</ecNumber>
    </recommendedName>
    <alternativeName>
        <fullName evidence="1">ATP synthase F1 sector subunit beta</fullName>
    </alternativeName>
    <alternativeName>
        <fullName evidence="1">F-ATPase subunit beta</fullName>
    </alternativeName>
</protein>
<organism>
    <name type="scientific">Pelagibacter ubique (strain HTCC1062)</name>
    <dbReference type="NCBI Taxonomy" id="335992"/>
    <lineage>
        <taxon>Bacteria</taxon>
        <taxon>Pseudomonadati</taxon>
        <taxon>Pseudomonadota</taxon>
        <taxon>Alphaproteobacteria</taxon>
        <taxon>Candidatus Pelagibacterales</taxon>
        <taxon>Candidatus Pelagibacteraceae</taxon>
        <taxon>Candidatus Pelagibacter</taxon>
    </lineage>
</organism>
<evidence type="ECO:0000255" key="1">
    <source>
        <dbReference type="HAMAP-Rule" id="MF_01347"/>
    </source>
</evidence>
<dbReference type="EC" id="7.1.2.2" evidence="1"/>
<dbReference type="EMBL" id="CP000084">
    <property type="protein sequence ID" value="AAZ21051.1"/>
    <property type="molecule type" value="Genomic_DNA"/>
</dbReference>
<dbReference type="RefSeq" id="WP_006997680.1">
    <property type="nucleotide sequence ID" value="NC_007205.1"/>
</dbReference>
<dbReference type="SMR" id="Q4FP38"/>
<dbReference type="STRING" id="335992.SAR11_0230"/>
<dbReference type="GeneID" id="66294727"/>
<dbReference type="KEGG" id="pub:SAR11_0230"/>
<dbReference type="eggNOG" id="COG0055">
    <property type="taxonomic scope" value="Bacteria"/>
</dbReference>
<dbReference type="HOGENOM" id="CLU_022398_0_2_5"/>
<dbReference type="OrthoDB" id="9801639at2"/>
<dbReference type="Proteomes" id="UP000002528">
    <property type="component" value="Chromosome"/>
</dbReference>
<dbReference type="GO" id="GO:0005886">
    <property type="term" value="C:plasma membrane"/>
    <property type="evidence" value="ECO:0007669"/>
    <property type="project" value="UniProtKB-SubCell"/>
</dbReference>
<dbReference type="GO" id="GO:0045259">
    <property type="term" value="C:proton-transporting ATP synthase complex"/>
    <property type="evidence" value="ECO:0007669"/>
    <property type="project" value="UniProtKB-KW"/>
</dbReference>
<dbReference type="GO" id="GO:0005524">
    <property type="term" value="F:ATP binding"/>
    <property type="evidence" value="ECO:0007669"/>
    <property type="project" value="UniProtKB-UniRule"/>
</dbReference>
<dbReference type="GO" id="GO:0016887">
    <property type="term" value="F:ATP hydrolysis activity"/>
    <property type="evidence" value="ECO:0007669"/>
    <property type="project" value="InterPro"/>
</dbReference>
<dbReference type="GO" id="GO:0046933">
    <property type="term" value="F:proton-transporting ATP synthase activity, rotational mechanism"/>
    <property type="evidence" value="ECO:0007669"/>
    <property type="project" value="UniProtKB-UniRule"/>
</dbReference>
<dbReference type="CDD" id="cd18110">
    <property type="entry name" value="ATP-synt_F1_beta_C"/>
    <property type="match status" value="1"/>
</dbReference>
<dbReference type="CDD" id="cd18115">
    <property type="entry name" value="ATP-synt_F1_beta_N"/>
    <property type="match status" value="1"/>
</dbReference>
<dbReference type="CDD" id="cd01133">
    <property type="entry name" value="F1-ATPase_beta_CD"/>
    <property type="match status" value="1"/>
</dbReference>
<dbReference type="FunFam" id="1.10.1140.10:FF:000001">
    <property type="entry name" value="ATP synthase subunit beta"/>
    <property type="match status" value="1"/>
</dbReference>
<dbReference type="FunFam" id="3.40.50.300:FF:000026">
    <property type="entry name" value="ATP synthase subunit beta"/>
    <property type="match status" value="1"/>
</dbReference>
<dbReference type="Gene3D" id="2.40.10.170">
    <property type="match status" value="1"/>
</dbReference>
<dbReference type="Gene3D" id="1.10.1140.10">
    <property type="entry name" value="Bovine Mitochondrial F1-atpase, Atp Synthase Beta Chain, Chain D, domain 3"/>
    <property type="match status" value="1"/>
</dbReference>
<dbReference type="Gene3D" id="3.40.50.300">
    <property type="entry name" value="P-loop containing nucleotide triphosphate hydrolases"/>
    <property type="match status" value="1"/>
</dbReference>
<dbReference type="HAMAP" id="MF_01347">
    <property type="entry name" value="ATP_synth_beta_bact"/>
    <property type="match status" value="1"/>
</dbReference>
<dbReference type="InterPro" id="IPR003593">
    <property type="entry name" value="AAA+_ATPase"/>
</dbReference>
<dbReference type="InterPro" id="IPR055190">
    <property type="entry name" value="ATP-synt_VA_C"/>
</dbReference>
<dbReference type="InterPro" id="IPR005722">
    <property type="entry name" value="ATP_synth_F1_bsu"/>
</dbReference>
<dbReference type="InterPro" id="IPR020003">
    <property type="entry name" value="ATPase_a/bsu_AS"/>
</dbReference>
<dbReference type="InterPro" id="IPR050053">
    <property type="entry name" value="ATPase_alpha/beta_chains"/>
</dbReference>
<dbReference type="InterPro" id="IPR004100">
    <property type="entry name" value="ATPase_F1/V1/A1_a/bsu_N"/>
</dbReference>
<dbReference type="InterPro" id="IPR036121">
    <property type="entry name" value="ATPase_F1/V1/A1_a/bsu_N_sf"/>
</dbReference>
<dbReference type="InterPro" id="IPR000194">
    <property type="entry name" value="ATPase_F1/V1/A1_a/bsu_nucl-bd"/>
</dbReference>
<dbReference type="InterPro" id="IPR024034">
    <property type="entry name" value="ATPase_F1/V1_b/a_C"/>
</dbReference>
<dbReference type="InterPro" id="IPR027417">
    <property type="entry name" value="P-loop_NTPase"/>
</dbReference>
<dbReference type="NCBIfam" id="TIGR01039">
    <property type="entry name" value="atpD"/>
    <property type="match status" value="1"/>
</dbReference>
<dbReference type="PANTHER" id="PTHR15184">
    <property type="entry name" value="ATP SYNTHASE"/>
    <property type="match status" value="1"/>
</dbReference>
<dbReference type="PANTHER" id="PTHR15184:SF71">
    <property type="entry name" value="ATP SYNTHASE SUBUNIT BETA, MITOCHONDRIAL"/>
    <property type="match status" value="1"/>
</dbReference>
<dbReference type="Pfam" id="PF00006">
    <property type="entry name" value="ATP-synt_ab"/>
    <property type="match status" value="1"/>
</dbReference>
<dbReference type="Pfam" id="PF02874">
    <property type="entry name" value="ATP-synt_ab_N"/>
    <property type="match status" value="1"/>
</dbReference>
<dbReference type="Pfam" id="PF22919">
    <property type="entry name" value="ATP-synt_VA_C"/>
    <property type="match status" value="1"/>
</dbReference>
<dbReference type="PIRSF" id="PIRSF039072">
    <property type="entry name" value="ATPase_subunit_beta"/>
    <property type="match status" value="1"/>
</dbReference>
<dbReference type="SMART" id="SM00382">
    <property type="entry name" value="AAA"/>
    <property type="match status" value="1"/>
</dbReference>
<dbReference type="SUPFAM" id="SSF47917">
    <property type="entry name" value="C-terminal domain of alpha and beta subunits of F1 ATP synthase"/>
    <property type="match status" value="1"/>
</dbReference>
<dbReference type="SUPFAM" id="SSF50615">
    <property type="entry name" value="N-terminal domain of alpha and beta subunits of F1 ATP synthase"/>
    <property type="match status" value="1"/>
</dbReference>
<dbReference type="SUPFAM" id="SSF52540">
    <property type="entry name" value="P-loop containing nucleoside triphosphate hydrolases"/>
    <property type="match status" value="1"/>
</dbReference>
<dbReference type="PROSITE" id="PS00152">
    <property type="entry name" value="ATPASE_ALPHA_BETA"/>
    <property type="match status" value="1"/>
</dbReference>
<reference key="1">
    <citation type="journal article" date="2005" name="Science">
        <title>Genome streamlining in a cosmopolitan oceanic bacterium.</title>
        <authorList>
            <person name="Giovannoni S.J."/>
            <person name="Tripp H.J."/>
            <person name="Givan S."/>
            <person name="Podar M."/>
            <person name="Vergin K.L."/>
            <person name="Baptista D."/>
            <person name="Bibbs L."/>
            <person name="Eads J."/>
            <person name="Richardson T.H."/>
            <person name="Noordewier M."/>
            <person name="Rappe M.S."/>
            <person name="Short J.M."/>
            <person name="Carrington J.C."/>
            <person name="Mathur E.J."/>
        </authorList>
    </citation>
    <scope>NUCLEOTIDE SEQUENCE [LARGE SCALE GENOMIC DNA]</scope>
    <source>
        <strain>HTCC1062</strain>
    </source>
</reference>
<keyword id="KW-0066">ATP synthesis</keyword>
<keyword id="KW-0067">ATP-binding</keyword>
<keyword id="KW-0997">Cell inner membrane</keyword>
<keyword id="KW-1003">Cell membrane</keyword>
<keyword id="KW-0139">CF(1)</keyword>
<keyword id="KW-0375">Hydrogen ion transport</keyword>
<keyword id="KW-0406">Ion transport</keyword>
<keyword id="KW-0472">Membrane</keyword>
<keyword id="KW-0547">Nucleotide-binding</keyword>
<keyword id="KW-1185">Reference proteome</keyword>
<keyword id="KW-1278">Translocase</keyword>
<keyword id="KW-0813">Transport</keyword>